<gene>
    <name evidence="1" type="primary">rplF</name>
    <name type="ordered locus">BRE_499</name>
</gene>
<keyword id="KW-0687">Ribonucleoprotein</keyword>
<keyword id="KW-0689">Ribosomal protein</keyword>
<keyword id="KW-0694">RNA-binding</keyword>
<keyword id="KW-0699">rRNA-binding</keyword>
<protein>
    <recommendedName>
        <fullName evidence="1">Large ribosomal subunit protein uL6</fullName>
    </recommendedName>
    <alternativeName>
        <fullName evidence="2">50S ribosomal protein L6</fullName>
    </alternativeName>
</protein>
<dbReference type="EMBL" id="CP000993">
    <property type="protein sequence ID" value="ACH94731.1"/>
    <property type="molecule type" value="Genomic_DNA"/>
</dbReference>
<dbReference type="RefSeq" id="WP_012538939.1">
    <property type="nucleotide sequence ID" value="NC_011244.1"/>
</dbReference>
<dbReference type="SMR" id="B5RPJ7"/>
<dbReference type="KEGG" id="bre:BRE_499"/>
<dbReference type="HOGENOM" id="CLU_065464_1_2_12"/>
<dbReference type="Proteomes" id="UP000000612">
    <property type="component" value="Chromosome"/>
</dbReference>
<dbReference type="GO" id="GO:0022625">
    <property type="term" value="C:cytosolic large ribosomal subunit"/>
    <property type="evidence" value="ECO:0007669"/>
    <property type="project" value="TreeGrafter"/>
</dbReference>
<dbReference type="GO" id="GO:0019843">
    <property type="term" value="F:rRNA binding"/>
    <property type="evidence" value="ECO:0007669"/>
    <property type="project" value="UniProtKB-UniRule"/>
</dbReference>
<dbReference type="GO" id="GO:0003735">
    <property type="term" value="F:structural constituent of ribosome"/>
    <property type="evidence" value="ECO:0007669"/>
    <property type="project" value="InterPro"/>
</dbReference>
<dbReference type="GO" id="GO:0002181">
    <property type="term" value="P:cytoplasmic translation"/>
    <property type="evidence" value="ECO:0007669"/>
    <property type="project" value="TreeGrafter"/>
</dbReference>
<dbReference type="FunFam" id="3.90.930.12:FF:000002">
    <property type="entry name" value="50S ribosomal protein L6"/>
    <property type="match status" value="1"/>
</dbReference>
<dbReference type="Gene3D" id="3.90.930.12">
    <property type="entry name" value="Ribosomal protein L6, alpha-beta domain"/>
    <property type="match status" value="2"/>
</dbReference>
<dbReference type="HAMAP" id="MF_01365_B">
    <property type="entry name" value="Ribosomal_uL6_B"/>
    <property type="match status" value="1"/>
</dbReference>
<dbReference type="InterPro" id="IPR000702">
    <property type="entry name" value="Ribosomal_uL6-like"/>
</dbReference>
<dbReference type="InterPro" id="IPR036789">
    <property type="entry name" value="Ribosomal_uL6-like_a/b-dom_sf"/>
</dbReference>
<dbReference type="InterPro" id="IPR020040">
    <property type="entry name" value="Ribosomal_uL6_a/b-dom"/>
</dbReference>
<dbReference type="InterPro" id="IPR019906">
    <property type="entry name" value="Ribosomal_uL6_bac-type"/>
</dbReference>
<dbReference type="InterPro" id="IPR002358">
    <property type="entry name" value="Ribosomal_uL6_CS"/>
</dbReference>
<dbReference type="NCBIfam" id="TIGR03654">
    <property type="entry name" value="L6_bact"/>
    <property type="match status" value="1"/>
</dbReference>
<dbReference type="PANTHER" id="PTHR11655">
    <property type="entry name" value="60S/50S RIBOSOMAL PROTEIN L6/L9"/>
    <property type="match status" value="1"/>
</dbReference>
<dbReference type="PANTHER" id="PTHR11655:SF14">
    <property type="entry name" value="LARGE RIBOSOMAL SUBUNIT PROTEIN UL6M"/>
    <property type="match status" value="1"/>
</dbReference>
<dbReference type="Pfam" id="PF00347">
    <property type="entry name" value="Ribosomal_L6"/>
    <property type="match status" value="2"/>
</dbReference>
<dbReference type="PIRSF" id="PIRSF002162">
    <property type="entry name" value="Ribosomal_L6"/>
    <property type="match status" value="1"/>
</dbReference>
<dbReference type="PRINTS" id="PR00059">
    <property type="entry name" value="RIBOSOMALL6"/>
</dbReference>
<dbReference type="SUPFAM" id="SSF56053">
    <property type="entry name" value="Ribosomal protein L6"/>
    <property type="match status" value="2"/>
</dbReference>
<dbReference type="PROSITE" id="PS00525">
    <property type="entry name" value="RIBOSOMAL_L6_1"/>
    <property type="match status" value="1"/>
</dbReference>
<feature type="chain" id="PRO_1000143949" description="Large ribosomal subunit protein uL6">
    <location>
        <begin position="1"/>
        <end position="180"/>
    </location>
</feature>
<evidence type="ECO:0000255" key="1">
    <source>
        <dbReference type="HAMAP-Rule" id="MF_01365"/>
    </source>
</evidence>
<evidence type="ECO:0000305" key="2"/>
<proteinExistence type="inferred from homology"/>
<name>RL6_BORRA</name>
<comment type="function">
    <text evidence="1">This protein binds to the 23S rRNA, and is important in its secondary structure. It is located near the subunit interface in the base of the L7/L12 stalk, and near the tRNA binding site of the peptidyltransferase center.</text>
</comment>
<comment type="subunit">
    <text evidence="1">Part of the 50S ribosomal subunit.</text>
</comment>
<comment type="similarity">
    <text evidence="1">Belongs to the universal ribosomal protein uL6 family.</text>
</comment>
<reference key="1">
    <citation type="journal article" date="2008" name="PLoS Genet.">
        <title>The genome of Borrelia recurrentis, the agent of deadly louse-borne relapsing fever, is a degraded subset of tick-borne Borrelia duttonii.</title>
        <authorList>
            <person name="Lescot M."/>
            <person name="Audic S."/>
            <person name="Robert C."/>
            <person name="Nguyen T.T."/>
            <person name="Blanc G."/>
            <person name="Cutler S.J."/>
            <person name="Wincker P."/>
            <person name="Couloux A."/>
            <person name="Claverie J.-M."/>
            <person name="Raoult D."/>
            <person name="Drancourt M."/>
        </authorList>
    </citation>
    <scope>NUCLEOTIDE SEQUENCE [LARGE SCALE GENOMIC DNA]</scope>
    <source>
        <strain>A1</strain>
    </source>
</reference>
<accession>B5RPJ7</accession>
<sequence length="180" mass="20168">MSRIGKLPIKIADSVKVDIKDNFITVEGKRGKLSQEINSSIRVKIEDNNIIVERAFNNKQTRAFHGLYRSLIFNMVKGVSDGFSKSLTINGIGYRVEQQGNSLFFNLGYSTQFEYVIPEGINIRLDGNTKIAVEGIDKCRVGQVAAEIRSLKVPEPYKGKGIKYDNEVIRRKVGKSGVKK</sequence>
<organism>
    <name type="scientific">Borrelia recurrentis (strain A1)</name>
    <dbReference type="NCBI Taxonomy" id="412418"/>
    <lineage>
        <taxon>Bacteria</taxon>
        <taxon>Pseudomonadati</taxon>
        <taxon>Spirochaetota</taxon>
        <taxon>Spirochaetia</taxon>
        <taxon>Spirochaetales</taxon>
        <taxon>Borreliaceae</taxon>
        <taxon>Borrelia</taxon>
    </lineage>
</organism>